<reference key="1">
    <citation type="journal article" date="2005" name="Science">
        <title>The transcriptional landscape of the mammalian genome.</title>
        <authorList>
            <person name="Carninci P."/>
            <person name="Kasukawa T."/>
            <person name="Katayama S."/>
            <person name="Gough J."/>
            <person name="Frith M.C."/>
            <person name="Maeda N."/>
            <person name="Oyama R."/>
            <person name="Ravasi T."/>
            <person name="Lenhard B."/>
            <person name="Wells C."/>
            <person name="Kodzius R."/>
            <person name="Shimokawa K."/>
            <person name="Bajic V.B."/>
            <person name="Brenner S.E."/>
            <person name="Batalov S."/>
            <person name="Forrest A.R."/>
            <person name="Zavolan M."/>
            <person name="Davis M.J."/>
            <person name="Wilming L.G."/>
            <person name="Aidinis V."/>
            <person name="Allen J.E."/>
            <person name="Ambesi-Impiombato A."/>
            <person name="Apweiler R."/>
            <person name="Aturaliya R.N."/>
            <person name="Bailey T.L."/>
            <person name="Bansal M."/>
            <person name="Baxter L."/>
            <person name="Beisel K.W."/>
            <person name="Bersano T."/>
            <person name="Bono H."/>
            <person name="Chalk A.M."/>
            <person name="Chiu K.P."/>
            <person name="Choudhary V."/>
            <person name="Christoffels A."/>
            <person name="Clutterbuck D.R."/>
            <person name="Crowe M.L."/>
            <person name="Dalla E."/>
            <person name="Dalrymple B.P."/>
            <person name="de Bono B."/>
            <person name="Della Gatta G."/>
            <person name="di Bernardo D."/>
            <person name="Down T."/>
            <person name="Engstrom P."/>
            <person name="Fagiolini M."/>
            <person name="Faulkner G."/>
            <person name="Fletcher C.F."/>
            <person name="Fukushima T."/>
            <person name="Furuno M."/>
            <person name="Futaki S."/>
            <person name="Gariboldi M."/>
            <person name="Georgii-Hemming P."/>
            <person name="Gingeras T.R."/>
            <person name="Gojobori T."/>
            <person name="Green R.E."/>
            <person name="Gustincich S."/>
            <person name="Harbers M."/>
            <person name="Hayashi Y."/>
            <person name="Hensch T.K."/>
            <person name="Hirokawa N."/>
            <person name="Hill D."/>
            <person name="Huminiecki L."/>
            <person name="Iacono M."/>
            <person name="Ikeo K."/>
            <person name="Iwama A."/>
            <person name="Ishikawa T."/>
            <person name="Jakt M."/>
            <person name="Kanapin A."/>
            <person name="Katoh M."/>
            <person name="Kawasawa Y."/>
            <person name="Kelso J."/>
            <person name="Kitamura H."/>
            <person name="Kitano H."/>
            <person name="Kollias G."/>
            <person name="Krishnan S.P."/>
            <person name="Kruger A."/>
            <person name="Kummerfeld S.K."/>
            <person name="Kurochkin I.V."/>
            <person name="Lareau L.F."/>
            <person name="Lazarevic D."/>
            <person name="Lipovich L."/>
            <person name="Liu J."/>
            <person name="Liuni S."/>
            <person name="McWilliam S."/>
            <person name="Madan Babu M."/>
            <person name="Madera M."/>
            <person name="Marchionni L."/>
            <person name="Matsuda H."/>
            <person name="Matsuzawa S."/>
            <person name="Miki H."/>
            <person name="Mignone F."/>
            <person name="Miyake S."/>
            <person name="Morris K."/>
            <person name="Mottagui-Tabar S."/>
            <person name="Mulder N."/>
            <person name="Nakano N."/>
            <person name="Nakauchi H."/>
            <person name="Ng P."/>
            <person name="Nilsson R."/>
            <person name="Nishiguchi S."/>
            <person name="Nishikawa S."/>
            <person name="Nori F."/>
            <person name="Ohara O."/>
            <person name="Okazaki Y."/>
            <person name="Orlando V."/>
            <person name="Pang K.C."/>
            <person name="Pavan W.J."/>
            <person name="Pavesi G."/>
            <person name="Pesole G."/>
            <person name="Petrovsky N."/>
            <person name="Piazza S."/>
            <person name="Reed J."/>
            <person name="Reid J.F."/>
            <person name="Ring B.Z."/>
            <person name="Ringwald M."/>
            <person name="Rost B."/>
            <person name="Ruan Y."/>
            <person name="Salzberg S.L."/>
            <person name="Sandelin A."/>
            <person name="Schneider C."/>
            <person name="Schoenbach C."/>
            <person name="Sekiguchi K."/>
            <person name="Semple C.A."/>
            <person name="Seno S."/>
            <person name="Sessa L."/>
            <person name="Sheng Y."/>
            <person name="Shibata Y."/>
            <person name="Shimada H."/>
            <person name="Shimada K."/>
            <person name="Silva D."/>
            <person name="Sinclair B."/>
            <person name="Sperling S."/>
            <person name="Stupka E."/>
            <person name="Sugiura K."/>
            <person name="Sultana R."/>
            <person name="Takenaka Y."/>
            <person name="Taki K."/>
            <person name="Tammoja K."/>
            <person name="Tan S.L."/>
            <person name="Tang S."/>
            <person name="Taylor M.S."/>
            <person name="Tegner J."/>
            <person name="Teichmann S.A."/>
            <person name="Ueda H.R."/>
            <person name="van Nimwegen E."/>
            <person name="Verardo R."/>
            <person name="Wei C.L."/>
            <person name="Yagi K."/>
            <person name="Yamanishi H."/>
            <person name="Zabarovsky E."/>
            <person name="Zhu S."/>
            <person name="Zimmer A."/>
            <person name="Hide W."/>
            <person name="Bult C."/>
            <person name="Grimmond S.M."/>
            <person name="Teasdale R.D."/>
            <person name="Liu E.T."/>
            <person name="Brusic V."/>
            <person name="Quackenbush J."/>
            <person name="Wahlestedt C."/>
            <person name="Mattick J.S."/>
            <person name="Hume D.A."/>
            <person name="Kai C."/>
            <person name="Sasaki D."/>
            <person name="Tomaru Y."/>
            <person name="Fukuda S."/>
            <person name="Kanamori-Katayama M."/>
            <person name="Suzuki M."/>
            <person name="Aoki J."/>
            <person name="Arakawa T."/>
            <person name="Iida J."/>
            <person name="Imamura K."/>
            <person name="Itoh M."/>
            <person name="Kato T."/>
            <person name="Kawaji H."/>
            <person name="Kawagashira N."/>
            <person name="Kawashima T."/>
            <person name="Kojima M."/>
            <person name="Kondo S."/>
            <person name="Konno H."/>
            <person name="Nakano K."/>
            <person name="Ninomiya N."/>
            <person name="Nishio T."/>
            <person name="Okada M."/>
            <person name="Plessy C."/>
            <person name="Shibata K."/>
            <person name="Shiraki T."/>
            <person name="Suzuki S."/>
            <person name="Tagami M."/>
            <person name="Waki K."/>
            <person name="Watahiki A."/>
            <person name="Okamura-Oho Y."/>
            <person name="Suzuki H."/>
            <person name="Kawai J."/>
            <person name="Hayashizaki Y."/>
        </authorList>
    </citation>
    <scope>NUCLEOTIDE SEQUENCE [LARGE SCALE MRNA] (ISOFORMS 2 AND 3)</scope>
    <scope>NUCLEOTIDE SEQUENCE [LARGE SCALE MRNA] OF 1-237 (ISOFORM 1)</scope>
    <source>
        <strain>C57BL/6J</strain>
        <strain>NOD</strain>
        <tissue>Aorta</tissue>
        <tissue>Inner ear</tissue>
        <tissue>Spleen</tissue>
        <tissue>Vein</tissue>
    </source>
</reference>
<reference key="2">
    <citation type="journal article" date="2004" name="Genome Res.">
        <title>The status, quality, and expansion of the NIH full-length cDNA project: the Mammalian Gene Collection (MGC).</title>
        <authorList>
            <consortium name="The MGC Project Team"/>
        </authorList>
    </citation>
    <scope>NUCLEOTIDE SEQUENCE [LARGE SCALE MRNA] (ISOFORM 1)</scope>
    <source>
        <strain>FVB/N</strain>
        <tissue>Mammary tumor</tissue>
        <tissue>Olfactory epithelium</tissue>
    </source>
</reference>
<gene>
    <name evidence="5" type="primary">Mppe1</name>
    <name evidence="1" type="synonym">Pgap5</name>
</gene>
<evidence type="ECO:0000250" key="1">
    <source>
        <dbReference type="UniProtKB" id="Q53F39"/>
    </source>
</evidence>
<evidence type="ECO:0000255" key="2"/>
<evidence type="ECO:0000303" key="3">
    <source>
    </source>
</evidence>
<evidence type="ECO:0000305" key="4"/>
<evidence type="ECO:0000312" key="5">
    <source>
        <dbReference type="MGI" id="MGI:2661311"/>
    </source>
</evidence>
<name>MPPE1_MOUSE</name>
<keyword id="KW-0025">Alternative splicing</keyword>
<keyword id="KW-0931">ER-Golgi transport</keyword>
<keyword id="KW-0337">GPI-anchor biosynthesis</keyword>
<keyword id="KW-0378">Hydrolase</keyword>
<keyword id="KW-0464">Manganese</keyword>
<keyword id="KW-0472">Membrane</keyword>
<keyword id="KW-0479">Metal-binding</keyword>
<keyword id="KW-1185">Reference proteome</keyword>
<keyword id="KW-0812">Transmembrane</keyword>
<keyword id="KW-1133">Transmembrane helix</keyword>
<keyword id="KW-0813">Transport</keyword>
<sequence length="396" mass="46012">MALVRWGLKRQNFHPLRRRRRALLLKLTVVIISVLLFCEYFIYYLVLFRCHWPEVKTLAHGGRQEPVLKAMFLADTHLLGEIRGHWLDKLRREWQMERAFQTALWLLQPEVVFILGDIFDEGKWSSDQAWADDVQRFQRMFRHDSHVQLKVVIGNHDVGFHYQMSKYRIKRFEKVFGSERLLSLKGVNFVMVNSVAMEGDGCIICSEEEAELREISRKLNCSQEVPGSSQCDREPEPRLPLSAPVLLQHYPLYRASDANCSGEDAAPPEERNVPFEEKYDVLSREASQKLLWWLRPRLVLSGHTHSACEVLHPGGAPEVSVPSFSWRNRNNPSFIMGSLTSRDYALSKCYLPFEDTVLTMYGAAAGFLMILILVHFEHLPSPFLCGWKLCRLHMRR</sequence>
<proteinExistence type="evidence at transcript level"/>
<organism>
    <name type="scientific">Mus musculus</name>
    <name type="common">Mouse</name>
    <dbReference type="NCBI Taxonomy" id="10090"/>
    <lineage>
        <taxon>Eukaryota</taxon>
        <taxon>Metazoa</taxon>
        <taxon>Chordata</taxon>
        <taxon>Craniata</taxon>
        <taxon>Vertebrata</taxon>
        <taxon>Euteleostomi</taxon>
        <taxon>Mammalia</taxon>
        <taxon>Eutheria</taxon>
        <taxon>Euarchontoglires</taxon>
        <taxon>Glires</taxon>
        <taxon>Rodentia</taxon>
        <taxon>Myomorpha</taxon>
        <taxon>Muroidea</taxon>
        <taxon>Muridae</taxon>
        <taxon>Murinae</taxon>
        <taxon>Mus</taxon>
        <taxon>Mus</taxon>
    </lineage>
</organism>
<accession>Q80XL7</accession>
<accession>Q3T9I6</accession>
<accession>Q3TYP9</accession>
<accession>Q3U4F5</accession>
<accession>Q8BLU5</accession>
<protein>
    <recommendedName>
        <fullName evidence="4">Metallophosphoesterase 1</fullName>
        <ecNumber evidence="1">3.1.-.-</ecNumber>
    </recommendedName>
    <alternativeName>
        <fullName>Post-GPI attachment to proteins factor 5</fullName>
    </alternativeName>
</protein>
<dbReference type="EC" id="3.1.-.-" evidence="1"/>
<dbReference type="EMBL" id="AK041262">
    <property type="protein sequence ID" value="BAC30883.1"/>
    <property type="molecule type" value="mRNA"/>
</dbReference>
<dbReference type="EMBL" id="AK154265">
    <property type="protein sequence ID" value="BAE32476.1"/>
    <property type="molecule type" value="mRNA"/>
</dbReference>
<dbReference type="EMBL" id="AK158446">
    <property type="protein sequence ID" value="BAE34513.1"/>
    <property type="molecule type" value="mRNA"/>
</dbReference>
<dbReference type="EMBL" id="AK172496">
    <property type="protein sequence ID" value="BAE43034.1"/>
    <property type="molecule type" value="mRNA"/>
</dbReference>
<dbReference type="EMBL" id="BC045146">
    <property type="protein sequence ID" value="AAH45146.1"/>
    <property type="molecule type" value="mRNA"/>
</dbReference>
<dbReference type="EMBL" id="BC086456">
    <property type="protein sequence ID" value="AAH86456.1"/>
    <property type="molecule type" value="mRNA"/>
</dbReference>
<dbReference type="CCDS" id="CCDS29319.1">
    <molecule id="Q80XL7-2"/>
</dbReference>
<dbReference type="RefSeq" id="NP_001344447.1">
    <molecule id="Q80XL7-1"/>
    <property type="nucleotide sequence ID" value="NM_001357518.1"/>
</dbReference>
<dbReference type="RefSeq" id="NP_766218.1">
    <molecule id="Q80XL7-2"/>
    <property type="nucleotide sequence ID" value="NM_172630.3"/>
</dbReference>
<dbReference type="RefSeq" id="XP_006525953.1">
    <property type="nucleotide sequence ID" value="XM_006525890.2"/>
</dbReference>
<dbReference type="RefSeq" id="XP_030106302.1">
    <molecule id="Q80XL7-2"/>
    <property type="nucleotide sequence ID" value="XM_030250442.2"/>
</dbReference>
<dbReference type="RefSeq" id="XP_030106303.1">
    <molecule id="Q80XL7-1"/>
    <property type="nucleotide sequence ID" value="XM_030250443.2"/>
</dbReference>
<dbReference type="BioGRID" id="230417">
    <property type="interactions" value="2"/>
</dbReference>
<dbReference type="FunCoup" id="Q80XL7">
    <property type="interactions" value="1830"/>
</dbReference>
<dbReference type="STRING" id="10090.ENSMUSP00000072808"/>
<dbReference type="GlyGen" id="Q80XL7">
    <property type="glycosylation" value="2 sites, 2 N-linked glycans (2 sites)"/>
</dbReference>
<dbReference type="iPTMnet" id="Q80XL7"/>
<dbReference type="PhosphoSitePlus" id="Q80XL7"/>
<dbReference type="PaxDb" id="10090-ENSMUSP00000072808"/>
<dbReference type="ProteomicsDB" id="295588">
    <molecule id="Q80XL7-1"/>
</dbReference>
<dbReference type="ProteomicsDB" id="295589">
    <molecule id="Q80XL7-2"/>
</dbReference>
<dbReference type="ProteomicsDB" id="295590">
    <molecule id="Q80XL7-3"/>
</dbReference>
<dbReference type="Antibodypedia" id="1617">
    <property type="antibodies" value="132 antibodies from 24 providers"/>
</dbReference>
<dbReference type="Ensembl" id="ENSMUST00000073054.5">
    <molecule id="Q80XL7-2"/>
    <property type="protein sequence ID" value="ENSMUSP00000072808.4"/>
    <property type="gene ID" value="ENSMUSG00000062526.5"/>
</dbReference>
<dbReference type="GeneID" id="225651"/>
<dbReference type="KEGG" id="mmu:225651"/>
<dbReference type="UCSC" id="uc008flv.1">
    <molecule id="Q80XL7-2"/>
    <property type="organism name" value="mouse"/>
</dbReference>
<dbReference type="UCSC" id="uc008flw.1">
    <molecule id="Q80XL7-1"/>
    <property type="organism name" value="mouse"/>
</dbReference>
<dbReference type="UCSC" id="uc008flx.1">
    <molecule id="Q80XL7-3"/>
    <property type="organism name" value="mouse"/>
</dbReference>
<dbReference type="AGR" id="MGI:2661311"/>
<dbReference type="CTD" id="65258"/>
<dbReference type="MGI" id="MGI:2661311">
    <property type="gene designation" value="Mppe1"/>
</dbReference>
<dbReference type="VEuPathDB" id="HostDB:ENSMUSG00000062526"/>
<dbReference type="eggNOG" id="KOG3662">
    <property type="taxonomic scope" value="Eukaryota"/>
</dbReference>
<dbReference type="GeneTree" id="ENSGT00390000013236"/>
<dbReference type="HOGENOM" id="CLU_047168_2_0_1"/>
<dbReference type="InParanoid" id="Q80XL7"/>
<dbReference type="OMA" id="LHCMKYP"/>
<dbReference type="PhylomeDB" id="Q80XL7"/>
<dbReference type="TreeFam" id="TF314437"/>
<dbReference type="BioGRID-ORCS" id="225651">
    <property type="hits" value="2 hits in 75 CRISPR screens"/>
</dbReference>
<dbReference type="ChiTaRS" id="Mppe1">
    <property type="organism name" value="mouse"/>
</dbReference>
<dbReference type="PRO" id="PR:Q80XL7"/>
<dbReference type="Proteomes" id="UP000000589">
    <property type="component" value="Chromosome 18"/>
</dbReference>
<dbReference type="RNAct" id="Q80XL7">
    <property type="molecule type" value="protein"/>
</dbReference>
<dbReference type="Bgee" id="ENSMUSG00000062526">
    <property type="expression patterns" value="Expressed in granulocyte and 218 other cell types or tissues"/>
</dbReference>
<dbReference type="ExpressionAtlas" id="Q80XL7">
    <property type="expression patterns" value="baseline and differential"/>
</dbReference>
<dbReference type="GO" id="GO:0070971">
    <property type="term" value="C:endoplasmic reticulum exit site"/>
    <property type="evidence" value="ECO:0000250"/>
    <property type="project" value="UniProtKB"/>
</dbReference>
<dbReference type="GO" id="GO:0033116">
    <property type="term" value="C:endoplasmic reticulum-Golgi intermediate compartment membrane"/>
    <property type="evidence" value="ECO:0007669"/>
    <property type="project" value="UniProtKB-SubCell"/>
</dbReference>
<dbReference type="GO" id="GO:0005794">
    <property type="term" value="C:Golgi apparatus"/>
    <property type="evidence" value="ECO:0007669"/>
    <property type="project" value="UniProtKB-SubCell"/>
</dbReference>
<dbReference type="GO" id="GO:0005654">
    <property type="term" value="C:nucleoplasm"/>
    <property type="evidence" value="ECO:0007669"/>
    <property type="project" value="Ensembl"/>
</dbReference>
<dbReference type="GO" id="GO:0062050">
    <property type="term" value="F:GPI-mannose ethanolamine phosphate phosphodiesterase activity"/>
    <property type="evidence" value="ECO:0000250"/>
    <property type="project" value="UniProtKB"/>
</dbReference>
<dbReference type="GO" id="GO:0030145">
    <property type="term" value="F:manganese ion binding"/>
    <property type="evidence" value="ECO:0000250"/>
    <property type="project" value="UniProtKB"/>
</dbReference>
<dbReference type="GO" id="GO:0006888">
    <property type="term" value="P:endoplasmic reticulum to Golgi vesicle-mediated transport"/>
    <property type="evidence" value="ECO:0000250"/>
    <property type="project" value="UniProtKB"/>
</dbReference>
<dbReference type="GO" id="GO:0006506">
    <property type="term" value="P:GPI anchor biosynthetic process"/>
    <property type="evidence" value="ECO:0000250"/>
    <property type="project" value="UniProtKB"/>
</dbReference>
<dbReference type="CDD" id="cd08165">
    <property type="entry name" value="MPP_MPPE1"/>
    <property type="match status" value="1"/>
</dbReference>
<dbReference type="FunFam" id="3.60.21.10:FF:000022">
    <property type="entry name" value="Putative metallophosphoesterase 1"/>
    <property type="match status" value="1"/>
</dbReference>
<dbReference type="Gene3D" id="3.60.21.10">
    <property type="match status" value="1"/>
</dbReference>
<dbReference type="InterPro" id="IPR004843">
    <property type="entry name" value="Calcineurin-like_PHP_ApaH"/>
</dbReference>
<dbReference type="InterPro" id="IPR029052">
    <property type="entry name" value="Metallo-depent_PP-like"/>
</dbReference>
<dbReference type="InterPro" id="IPR039541">
    <property type="entry name" value="MPP_MPPE1"/>
</dbReference>
<dbReference type="InterPro" id="IPR033308">
    <property type="entry name" value="PGAP5/Cdc1/Ted1"/>
</dbReference>
<dbReference type="PANTHER" id="PTHR13315">
    <property type="entry name" value="METALLO PHOSPHOESTERASE RELATED"/>
    <property type="match status" value="1"/>
</dbReference>
<dbReference type="PANTHER" id="PTHR13315:SF0">
    <property type="entry name" value="METALLOPHOSPHOESTERASE 1"/>
    <property type="match status" value="1"/>
</dbReference>
<dbReference type="Pfam" id="PF00149">
    <property type="entry name" value="Metallophos"/>
    <property type="match status" value="1"/>
</dbReference>
<dbReference type="SUPFAM" id="SSF56300">
    <property type="entry name" value="Metallo-dependent phosphatases"/>
    <property type="match status" value="1"/>
</dbReference>
<feature type="chain" id="PRO_0000315729" description="Metallophosphoesterase 1">
    <location>
        <begin position="1"/>
        <end position="396"/>
    </location>
</feature>
<feature type="transmembrane region" description="Helical" evidence="2">
    <location>
        <begin position="28"/>
        <end position="48"/>
    </location>
</feature>
<feature type="transmembrane region" description="Helical" evidence="2">
    <location>
        <begin position="356"/>
        <end position="376"/>
    </location>
</feature>
<feature type="binding site" evidence="1">
    <location>
        <position position="75"/>
    </location>
    <ligand>
        <name>a divalent metal cation</name>
        <dbReference type="ChEBI" id="CHEBI:60240"/>
        <label>2</label>
    </ligand>
</feature>
<feature type="binding site" evidence="1">
    <location>
        <position position="117"/>
    </location>
    <ligand>
        <name>a divalent metal cation</name>
        <dbReference type="ChEBI" id="CHEBI:60240"/>
        <label>1</label>
    </ligand>
</feature>
<feature type="binding site" evidence="1">
    <location>
        <position position="117"/>
    </location>
    <ligand>
        <name>a divalent metal cation</name>
        <dbReference type="ChEBI" id="CHEBI:60240"/>
        <label>2</label>
    </ligand>
</feature>
<feature type="binding site" evidence="1">
    <location>
        <position position="155"/>
    </location>
    <ligand>
        <name>a divalent metal cation</name>
        <dbReference type="ChEBI" id="CHEBI:60240"/>
        <label>1</label>
    </ligand>
</feature>
<feature type="binding site" evidence="1">
    <location>
        <position position="249"/>
    </location>
    <ligand>
        <name>a divalent metal cation</name>
        <dbReference type="ChEBI" id="CHEBI:60240"/>
        <label>1</label>
    </ligand>
</feature>
<feature type="binding site" evidence="1">
    <location>
        <position position="249"/>
    </location>
    <ligand>
        <name>a divalent metal cation</name>
        <dbReference type="ChEBI" id="CHEBI:60240"/>
        <label>2</label>
    </ligand>
</feature>
<feature type="binding site" evidence="1">
    <location>
        <position position="303"/>
    </location>
    <ligand>
        <name>a divalent metal cation</name>
        <dbReference type="ChEBI" id="CHEBI:60240"/>
        <label>1</label>
    </ligand>
</feature>
<feature type="binding site" evidence="1">
    <location>
        <position position="305"/>
    </location>
    <ligand>
        <name>a divalent metal cation</name>
        <dbReference type="ChEBI" id="CHEBI:60240"/>
        <label>2</label>
    </ligand>
</feature>
<feature type="splice variant" id="VSP_030684" description="In isoform 3." evidence="3">
    <original>N</original>
    <variation>K</variation>
    <location>
        <position position="188"/>
    </location>
</feature>
<feature type="splice variant" id="VSP_030685" description="In isoform 3." evidence="3">
    <location>
        <begin position="189"/>
        <end position="396"/>
    </location>
</feature>
<feature type="splice variant" id="VSP_030686" description="In isoform 2." evidence="3">
    <original>E</original>
    <variation>EQ</variation>
    <location>
        <position position="224"/>
    </location>
</feature>
<feature type="sequence conflict" description="In Ref. 1; BAE32476." evidence="4" ref="1">
    <original>L</original>
    <variation>P</variation>
    <location>
        <position position="384"/>
    </location>
</feature>
<comment type="function">
    <text evidence="1">Metallophosphoesterase that catalyzes the removal of a side-chain ethanolamine-phosphate (EtNP) from the second mannose of the GPI-anchor protein intermediate. Participates in the glycan remodeling steps of GPI-anchor maturation to allow an efficient transport of GPI-anchor proteins from the endoplasmic reticulum to the Golgi.</text>
</comment>
<comment type="cofactor">
    <cofactor evidence="1">
        <name>Mn(2+)</name>
        <dbReference type="ChEBI" id="CHEBI:29035"/>
    </cofactor>
    <text evidence="1">Binds 2 manganese ions per subunit.</text>
</comment>
<comment type="subunit">
    <text evidence="1">Interacts with GPI-anchor proteins (via the GPI portion). Interacts with TMED10.</text>
</comment>
<comment type="subcellular location">
    <subcellularLocation>
        <location evidence="1">Endoplasmic reticulum-Golgi intermediate compartment membrane</location>
        <topology evidence="2">Multi-pass membrane protein</topology>
    </subcellularLocation>
    <text evidence="1">Also localizes to endoplasmic reticulum exit site.</text>
</comment>
<comment type="alternative products">
    <event type="alternative splicing"/>
    <isoform>
        <id>Q80XL7-1</id>
        <name>1</name>
        <sequence type="displayed"/>
    </isoform>
    <isoform>
        <id>Q80XL7-2</id>
        <name>2</name>
        <sequence type="described" ref="VSP_030686"/>
    </isoform>
    <isoform>
        <id>Q80XL7-3</id>
        <name>3</name>
        <sequence type="described" ref="VSP_030684 VSP_030685"/>
    </isoform>
</comment>
<comment type="similarity">
    <text evidence="4">Belongs to the metallophosphoesterase superfamily. MPPE1 family.</text>
</comment>